<accession>P19640</accession>
<sequence length="30" mass="3376">KETAAAKFERQHMDPAPAAAXXQNYCNQMM</sequence>
<gene>
    <name type="primary">RNASE1</name>
    <name type="synonym">RNS1</name>
</gene>
<organism>
    <name type="scientific">Odocoileus virginianus virginianus</name>
    <name type="common">Virginia white-tailed deer</name>
    <dbReference type="NCBI Taxonomy" id="9875"/>
    <lineage>
        <taxon>Eukaryota</taxon>
        <taxon>Metazoa</taxon>
        <taxon>Chordata</taxon>
        <taxon>Craniata</taxon>
        <taxon>Vertebrata</taxon>
        <taxon>Euteleostomi</taxon>
        <taxon>Mammalia</taxon>
        <taxon>Eutheria</taxon>
        <taxon>Laurasiatheria</taxon>
        <taxon>Artiodactyla</taxon>
        <taxon>Ruminantia</taxon>
        <taxon>Pecora</taxon>
        <taxon>Cervidae</taxon>
        <taxon>Odocoileinae</taxon>
        <taxon>Odocoileus</taxon>
    </lineage>
</organism>
<name>RNAS1_ODOVI</name>
<dbReference type="EC" id="4.6.1.18"/>
<dbReference type="PIR" id="A05004">
    <property type="entry name" value="A05004"/>
</dbReference>
<dbReference type="BMRB" id="P19640"/>
<dbReference type="GO" id="GO:0005576">
    <property type="term" value="C:extracellular region"/>
    <property type="evidence" value="ECO:0007669"/>
    <property type="project" value="UniProtKB-SubCell"/>
</dbReference>
<dbReference type="GO" id="GO:0016829">
    <property type="term" value="F:lyase activity"/>
    <property type="evidence" value="ECO:0007669"/>
    <property type="project" value="UniProtKB-KW"/>
</dbReference>
<dbReference type="GO" id="GO:0004522">
    <property type="term" value="F:ribonuclease A activity"/>
    <property type="evidence" value="ECO:0007669"/>
    <property type="project" value="UniProtKB-EC"/>
</dbReference>
<dbReference type="Gene3D" id="3.10.130.10">
    <property type="entry name" value="Ribonuclease A-like domain"/>
    <property type="match status" value="1"/>
</dbReference>
<dbReference type="InterPro" id="IPR036816">
    <property type="entry name" value="RNaseA-like_dom_sf"/>
</dbReference>
<dbReference type="SUPFAM" id="SSF54076">
    <property type="entry name" value="RNase A-like"/>
    <property type="match status" value="1"/>
</dbReference>
<evidence type="ECO:0000250" key="1"/>
<evidence type="ECO:0000256" key="2">
    <source>
        <dbReference type="SAM" id="MobiDB-lite"/>
    </source>
</evidence>
<evidence type="ECO:0000305" key="3"/>
<reference key="1">
    <citation type="journal article" date="1972" name="Nature">
        <title>Evolution of ribonuclease in relation to polypeptide folding mechanisms.</title>
        <authorList>
            <person name="Barnard E.A."/>
            <person name="Cohen M.S."/>
            <person name="Gold M.H."/>
            <person name="Kim J.K."/>
        </authorList>
    </citation>
    <scope>PROTEIN SEQUENCE</scope>
    <source>
        <tissue>Pancreas</tissue>
    </source>
</reference>
<proteinExistence type="evidence at protein level"/>
<feature type="chain" id="PRO_0000057207" description="Ribonuclease pancreatic">
    <location>
        <begin position="1"/>
        <end position="30" status="greater than"/>
    </location>
</feature>
<feature type="region of interest" description="Disordered" evidence="2">
    <location>
        <begin position="1"/>
        <end position="21"/>
    </location>
</feature>
<feature type="compositionally biased region" description="Basic and acidic residues" evidence="2">
    <location>
        <begin position="1"/>
        <end position="13"/>
    </location>
</feature>
<feature type="active site" description="Proton acceptor">
    <location>
        <position position="12"/>
    </location>
</feature>
<feature type="binding site" evidence="1">
    <location>
        <position position="7"/>
    </location>
    <ligand>
        <name>substrate</name>
    </ligand>
</feature>
<feature type="binding site" evidence="1">
    <location>
        <position position="10"/>
    </location>
    <ligand>
        <name>substrate</name>
    </ligand>
</feature>
<feature type="sequence variant">
    <original>T</original>
    <variation>S</variation>
    <location>
        <position position="3"/>
    </location>
</feature>
<feature type="non-terminal residue">
    <location>
        <position position="30"/>
    </location>
</feature>
<keyword id="KW-0903">Direct protein sequencing</keyword>
<keyword id="KW-0255">Endonuclease</keyword>
<keyword id="KW-0378">Hydrolase</keyword>
<keyword id="KW-0456">Lyase</keyword>
<keyword id="KW-0540">Nuclease</keyword>
<keyword id="KW-0964">Secreted</keyword>
<protein>
    <recommendedName>
        <fullName>Ribonuclease pancreatic</fullName>
        <ecNumber>4.6.1.18</ecNumber>
    </recommendedName>
    <alternativeName>
        <fullName>RNase 1</fullName>
    </alternativeName>
    <alternativeName>
        <fullName>RNase A</fullName>
    </alternativeName>
</protein>
<comment type="function">
    <text evidence="1">Endonuclease that catalyzes the cleavage of RNA on the 3' side of pyrimidine nucleotides. Acts on single-stranded and double-stranded RNA (By similarity).</text>
</comment>
<comment type="catalytic activity">
    <reaction>
        <text>an [RNA] containing cytidine + H2O = an [RNA]-3'-cytidine-3'-phosphate + a 5'-hydroxy-ribonucleotide-3'-[RNA].</text>
        <dbReference type="EC" id="4.6.1.18"/>
    </reaction>
</comment>
<comment type="catalytic activity">
    <reaction>
        <text>an [RNA] containing uridine + H2O = an [RNA]-3'-uridine-3'-phosphate + a 5'-hydroxy-ribonucleotide-3'-[RNA].</text>
        <dbReference type="EC" id="4.6.1.18"/>
    </reaction>
</comment>
<comment type="subunit">
    <text evidence="1">Monomer. Interacts with and forms tight 1:1 complexes with RNH1. Dimerization of two such complexes may occur. Interaction with RNH1 inhibits this protein (By similarity).</text>
</comment>
<comment type="subcellular location">
    <subcellularLocation>
        <location>Secreted</location>
    </subcellularLocation>
</comment>
<comment type="tissue specificity">
    <text>Pancreas.</text>
</comment>
<comment type="similarity">
    <text evidence="3">Belongs to the pancreatic ribonuclease family.</text>
</comment>